<sequence length="125" mass="13766">MRWQGSSRRKATGGKIIAARGKRKFEMGRESAETRISDVKRKNVHTMGGNRKVRLLQSNVANITNPKDGKTVTATIETVIDNTANKHYVRRNILTKGSVIRTPVGTARVTSRPGQDGVINAVLIE</sequence>
<proteinExistence type="inferred from homology"/>
<name>RS8E_METMA</name>
<reference key="1">
    <citation type="journal article" date="2002" name="J. Mol. Microbiol. Biotechnol.">
        <title>The genome of Methanosarcina mazei: evidence for lateral gene transfer between Bacteria and Archaea.</title>
        <authorList>
            <person name="Deppenmeier U."/>
            <person name="Johann A."/>
            <person name="Hartsch T."/>
            <person name="Merkl R."/>
            <person name="Schmitz R.A."/>
            <person name="Martinez-Arias R."/>
            <person name="Henne A."/>
            <person name="Wiezer A."/>
            <person name="Baeumer S."/>
            <person name="Jacobi C."/>
            <person name="Brueggemann H."/>
            <person name="Lienard T."/>
            <person name="Christmann A."/>
            <person name="Boemecke M."/>
            <person name="Steckel S."/>
            <person name="Bhattacharyya A."/>
            <person name="Lykidis A."/>
            <person name="Overbeek R."/>
            <person name="Klenk H.-P."/>
            <person name="Gunsalus R.P."/>
            <person name="Fritz H.-J."/>
            <person name="Gottschalk G."/>
        </authorList>
    </citation>
    <scope>NUCLEOTIDE SEQUENCE [LARGE SCALE GENOMIC DNA]</scope>
    <source>
        <strain>ATCC BAA-159 / DSM 3647 / Goe1 / Go1 / JCM 11833 / OCM 88</strain>
    </source>
</reference>
<protein>
    <recommendedName>
        <fullName evidence="1">Small ribosomal subunit protein eS8</fullName>
    </recommendedName>
    <alternativeName>
        <fullName evidence="2">30S ribosomal protein S8e</fullName>
    </alternativeName>
</protein>
<dbReference type="EMBL" id="AE008384">
    <property type="protein sequence ID" value="AAM31735.1"/>
    <property type="molecule type" value="Genomic_DNA"/>
</dbReference>
<dbReference type="RefSeq" id="WP_011033971.1">
    <property type="nucleotide sequence ID" value="NC_003901.1"/>
</dbReference>
<dbReference type="SMR" id="Q8PVC6"/>
<dbReference type="KEGG" id="mma:MM_2039"/>
<dbReference type="PATRIC" id="fig|192952.21.peg.2340"/>
<dbReference type="eggNOG" id="arCOG04154">
    <property type="taxonomic scope" value="Archaea"/>
</dbReference>
<dbReference type="HOGENOM" id="CLU_080597_2_1_2"/>
<dbReference type="Proteomes" id="UP000000595">
    <property type="component" value="Chromosome"/>
</dbReference>
<dbReference type="GO" id="GO:1990904">
    <property type="term" value="C:ribonucleoprotein complex"/>
    <property type="evidence" value="ECO:0007669"/>
    <property type="project" value="UniProtKB-KW"/>
</dbReference>
<dbReference type="GO" id="GO:0005840">
    <property type="term" value="C:ribosome"/>
    <property type="evidence" value="ECO:0007669"/>
    <property type="project" value="UniProtKB-KW"/>
</dbReference>
<dbReference type="GO" id="GO:0003735">
    <property type="term" value="F:structural constituent of ribosome"/>
    <property type="evidence" value="ECO:0007669"/>
    <property type="project" value="InterPro"/>
</dbReference>
<dbReference type="GO" id="GO:0006412">
    <property type="term" value="P:translation"/>
    <property type="evidence" value="ECO:0007669"/>
    <property type="project" value="UniProtKB-UniRule"/>
</dbReference>
<dbReference type="CDD" id="cd11382">
    <property type="entry name" value="Ribosomal_S8e"/>
    <property type="match status" value="1"/>
</dbReference>
<dbReference type="FunFam" id="2.40.10.310:FF:000002">
    <property type="entry name" value="30S ribosomal protein S8e"/>
    <property type="match status" value="1"/>
</dbReference>
<dbReference type="Gene3D" id="2.40.10.310">
    <property type="match status" value="1"/>
</dbReference>
<dbReference type="HAMAP" id="MF_00029">
    <property type="entry name" value="Ribosomal_eS8"/>
    <property type="match status" value="1"/>
</dbReference>
<dbReference type="InterPro" id="IPR001047">
    <property type="entry name" value="Ribosomal_eS8"/>
</dbReference>
<dbReference type="InterPro" id="IPR018283">
    <property type="entry name" value="Ribosomal_eS8_CS"/>
</dbReference>
<dbReference type="InterPro" id="IPR020919">
    <property type="entry name" value="Ribosomal_protein_eS8_arc"/>
</dbReference>
<dbReference type="InterPro" id="IPR022309">
    <property type="entry name" value="Ribosomal_Se8/biogenesis_NSA2"/>
</dbReference>
<dbReference type="NCBIfam" id="TIGR00307">
    <property type="entry name" value="eS8"/>
    <property type="match status" value="1"/>
</dbReference>
<dbReference type="PANTHER" id="PTHR10394">
    <property type="entry name" value="40S RIBOSOMAL PROTEIN S8"/>
    <property type="match status" value="1"/>
</dbReference>
<dbReference type="Pfam" id="PF01201">
    <property type="entry name" value="Ribosomal_S8e"/>
    <property type="match status" value="1"/>
</dbReference>
<dbReference type="PROSITE" id="PS01193">
    <property type="entry name" value="RIBOSOMAL_S8E"/>
    <property type="match status" value="1"/>
</dbReference>
<gene>
    <name evidence="1" type="primary">rps8e</name>
    <name type="ordered locus">MM_2039</name>
</gene>
<feature type="chain" id="PRO_0000122269" description="Small ribosomal subunit protein eS8">
    <location>
        <begin position="1"/>
        <end position="125"/>
    </location>
</feature>
<accession>Q8PVC6</accession>
<comment type="subunit">
    <text evidence="1">Part of the 30S ribosomal subunit.</text>
</comment>
<comment type="similarity">
    <text evidence="1">Belongs to the eukaryotic ribosomal protein eS8 family.</text>
</comment>
<organism>
    <name type="scientific">Methanosarcina mazei (strain ATCC BAA-159 / DSM 3647 / Goe1 / Go1 / JCM 11833 / OCM 88)</name>
    <name type="common">Methanosarcina frisia</name>
    <dbReference type="NCBI Taxonomy" id="192952"/>
    <lineage>
        <taxon>Archaea</taxon>
        <taxon>Methanobacteriati</taxon>
        <taxon>Methanobacteriota</taxon>
        <taxon>Stenosarchaea group</taxon>
        <taxon>Methanomicrobia</taxon>
        <taxon>Methanosarcinales</taxon>
        <taxon>Methanosarcinaceae</taxon>
        <taxon>Methanosarcina</taxon>
    </lineage>
</organism>
<keyword id="KW-0687">Ribonucleoprotein</keyword>
<keyword id="KW-0689">Ribosomal protein</keyword>
<evidence type="ECO:0000255" key="1">
    <source>
        <dbReference type="HAMAP-Rule" id="MF_00029"/>
    </source>
</evidence>
<evidence type="ECO:0000305" key="2"/>